<comment type="function">
    <text evidence="1">Required for the formation of a threonylcarbamoyl group on adenosine at position 37 (t(6)A37) in tRNAs that read codons beginning with adenine. Catalyzes the conversion of L-threonine, HCO(3)(-)/CO(2) and ATP to give threonylcarbamoyl-AMP (TC-AMP) as the acyladenylate intermediate, with the release of diphosphate.</text>
</comment>
<comment type="catalytic activity">
    <reaction evidence="1">
        <text>L-threonine + hydrogencarbonate + ATP = L-threonylcarbamoyladenylate + diphosphate + H2O</text>
        <dbReference type="Rhea" id="RHEA:36407"/>
        <dbReference type="ChEBI" id="CHEBI:15377"/>
        <dbReference type="ChEBI" id="CHEBI:17544"/>
        <dbReference type="ChEBI" id="CHEBI:30616"/>
        <dbReference type="ChEBI" id="CHEBI:33019"/>
        <dbReference type="ChEBI" id="CHEBI:57926"/>
        <dbReference type="ChEBI" id="CHEBI:73682"/>
        <dbReference type="EC" id="2.7.7.87"/>
    </reaction>
</comment>
<comment type="subcellular location">
    <subcellularLocation>
        <location evidence="1">Cytoplasm</location>
    </subcellularLocation>
</comment>
<comment type="similarity">
    <text evidence="1">Belongs to the SUA5 family. TsaC subfamily.</text>
</comment>
<dbReference type="EC" id="2.7.7.87" evidence="1"/>
<dbReference type="EMBL" id="CP000946">
    <property type="protein sequence ID" value="ACA76109.1"/>
    <property type="molecule type" value="Genomic_DNA"/>
</dbReference>
<dbReference type="RefSeq" id="WP_001301412.1">
    <property type="nucleotide sequence ID" value="NZ_MTFT01000014.1"/>
</dbReference>
<dbReference type="SMR" id="B1IQ17"/>
<dbReference type="KEGG" id="ecl:EcolC_0431"/>
<dbReference type="HOGENOM" id="CLU_031397_6_0_6"/>
<dbReference type="GO" id="GO:0005737">
    <property type="term" value="C:cytoplasm"/>
    <property type="evidence" value="ECO:0007669"/>
    <property type="project" value="UniProtKB-SubCell"/>
</dbReference>
<dbReference type="GO" id="GO:0005524">
    <property type="term" value="F:ATP binding"/>
    <property type="evidence" value="ECO:0007669"/>
    <property type="project" value="UniProtKB-UniRule"/>
</dbReference>
<dbReference type="GO" id="GO:0003725">
    <property type="term" value="F:double-stranded RNA binding"/>
    <property type="evidence" value="ECO:0007669"/>
    <property type="project" value="InterPro"/>
</dbReference>
<dbReference type="GO" id="GO:0061710">
    <property type="term" value="F:L-threonylcarbamoyladenylate synthase"/>
    <property type="evidence" value="ECO:0007669"/>
    <property type="project" value="UniProtKB-EC"/>
</dbReference>
<dbReference type="GO" id="GO:0000049">
    <property type="term" value="F:tRNA binding"/>
    <property type="evidence" value="ECO:0007669"/>
    <property type="project" value="TreeGrafter"/>
</dbReference>
<dbReference type="GO" id="GO:0006450">
    <property type="term" value="P:regulation of translational fidelity"/>
    <property type="evidence" value="ECO:0007669"/>
    <property type="project" value="TreeGrafter"/>
</dbReference>
<dbReference type="GO" id="GO:0002949">
    <property type="term" value="P:tRNA threonylcarbamoyladenosine modification"/>
    <property type="evidence" value="ECO:0007669"/>
    <property type="project" value="UniProtKB-UniRule"/>
</dbReference>
<dbReference type="FunFam" id="3.90.870.10:FF:000004">
    <property type="entry name" value="Threonylcarbamoyl-AMP synthase"/>
    <property type="match status" value="1"/>
</dbReference>
<dbReference type="Gene3D" id="3.90.870.10">
    <property type="entry name" value="DHBP synthase"/>
    <property type="match status" value="1"/>
</dbReference>
<dbReference type="HAMAP" id="MF_01852">
    <property type="entry name" value="TsaC"/>
    <property type="match status" value="1"/>
</dbReference>
<dbReference type="InterPro" id="IPR017945">
    <property type="entry name" value="DHBP_synth_RibB-like_a/b_dom"/>
</dbReference>
<dbReference type="InterPro" id="IPR006070">
    <property type="entry name" value="Sua5-like_dom"/>
</dbReference>
<dbReference type="InterPro" id="IPR023535">
    <property type="entry name" value="TC-AMP_synthase"/>
</dbReference>
<dbReference type="InterPro" id="IPR050156">
    <property type="entry name" value="TC-AMP_synthase_SUA5"/>
</dbReference>
<dbReference type="NCBIfam" id="NF007919">
    <property type="entry name" value="PRK10634.1"/>
    <property type="match status" value="1"/>
</dbReference>
<dbReference type="PANTHER" id="PTHR17490">
    <property type="entry name" value="SUA5"/>
    <property type="match status" value="1"/>
</dbReference>
<dbReference type="PANTHER" id="PTHR17490:SF18">
    <property type="entry name" value="THREONYLCARBAMOYL-AMP SYNTHASE"/>
    <property type="match status" value="1"/>
</dbReference>
<dbReference type="Pfam" id="PF01300">
    <property type="entry name" value="Sua5_yciO_yrdC"/>
    <property type="match status" value="1"/>
</dbReference>
<dbReference type="SUPFAM" id="SSF55821">
    <property type="entry name" value="YrdC/RibB"/>
    <property type="match status" value="1"/>
</dbReference>
<dbReference type="PROSITE" id="PS51163">
    <property type="entry name" value="YRDC"/>
    <property type="match status" value="1"/>
</dbReference>
<keyword id="KW-0067">ATP-binding</keyword>
<keyword id="KW-0963">Cytoplasm</keyword>
<keyword id="KW-0547">Nucleotide-binding</keyword>
<keyword id="KW-0548">Nucleotidyltransferase</keyword>
<keyword id="KW-0808">Transferase</keyword>
<keyword id="KW-0819">tRNA processing</keyword>
<accession>B1IQ17</accession>
<reference key="1">
    <citation type="submission" date="2008-02" db="EMBL/GenBank/DDBJ databases">
        <title>Complete sequence of Escherichia coli C str. ATCC 8739.</title>
        <authorList>
            <person name="Copeland A."/>
            <person name="Lucas S."/>
            <person name="Lapidus A."/>
            <person name="Glavina del Rio T."/>
            <person name="Dalin E."/>
            <person name="Tice H."/>
            <person name="Bruce D."/>
            <person name="Goodwin L."/>
            <person name="Pitluck S."/>
            <person name="Kiss H."/>
            <person name="Brettin T."/>
            <person name="Detter J.C."/>
            <person name="Han C."/>
            <person name="Kuske C.R."/>
            <person name="Schmutz J."/>
            <person name="Larimer F."/>
            <person name="Land M."/>
            <person name="Hauser L."/>
            <person name="Kyrpides N."/>
            <person name="Mikhailova N."/>
            <person name="Ingram L."/>
            <person name="Richardson P."/>
        </authorList>
    </citation>
    <scope>NUCLEOTIDE SEQUENCE [LARGE SCALE GENOMIC DNA]</scope>
    <source>
        <strain>ATCC 8739 / DSM 1576 / NBRC 3972 / NCIMB 8545 / WDCM 00012 / Crooks</strain>
    </source>
</reference>
<protein>
    <recommendedName>
        <fullName evidence="1">Threonylcarbamoyl-AMP synthase</fullName>
        <shortName evidence="1">TC-AMP synthase</shortName>
        <ecNumber evidence="1">2.7.7.87</ecNumber>
    </recommendedName>
    <alternativeName>
        <fullName evidence="1">L-threonylcarbamoyladenylate synthase</fullName>
    </alternativeName>
    <alternativeName>
        <fullName evidence="1">t(6)A37 threonylcarbamoyladenosine biosynthesis protein TsaC</fullName>
    </alternativeName>
    <alternativeName>
        <fullName evidence="1">tRNA threonylcarbamoyladenosine biosynthesis protein TsaC</fullName>
    </alternativeName>
</protein>
<proteinExistence type="inferred from homology"/>
<feature type="chain" id="PRO_0000352912" description="Threonylcarbamoyl-AMP synthase">
    <location>
        <begin position="1"/>
        <end position="190"/>
    </location>
</feature>
<feature type="domain" description="YrdC-like" evidence="1">
    <location>
        <begin position="7"/>
        <end position="190"/>
    </location>
</feature>
<organism>
    <name type="scientific">Escherichia coli (strain ATCC 8739 / DSM 1576 / NBRC 3972 / NCIMB 8545 / WDCM 00012 / Crooks)</name>
    <dbReference type="NCBI Taxonomy" id="481805"/>
    <lineage>
        <taxon>Bacteria</taxon>
        <taxon>Pseudomonadati</taxon>
        <taxon>Pseudomonadota</taxon>
        <taxon>Gammaproteobacteria</taxon>
        <taxon>Enterobacterales</taxon>
        <taxon>Enterobacteriaceae</taxon>
        <taxon>Escherichia</taxon>
    </lineage>
</organism>
<evidence type="ECO:0000255" key="1">
    <source>
        <dbReference type="HAMAP-Rule" id="MF_01852"/>
    </source>
</evidence>
<sequence length="190" mass="20768">MNNNLQRDAIAAAIDVLNEERVIAYPTEAVFGVGCDPDSETAVMRLLELKQRPVDKGLILIAANYEQLKPYIDDTMLTDVQRETIFSRWPGPVTFVFPAPATTPRWLTGRFDSLAVRVTDHPLVVALCQAYGKPLVSTSANLSGLPPCRTVDEVRAQFGAAFPVVPGETGGRLNPSEIRDALTGELFRQG</sequence>
<gene>
    <name evidence="1" type="primary">tsaC</name>
    <name type="synonym">rimN</name>
    <name type="ordered locus">EcolC_0431</name>
</gene>
<name>TSAC_ECOLC</name>